<proteinExistence type="inferred from homology"/>
<feature type="chain" id="PRO_1000011826" description="Diaminopimelate epimerase">
    <location>
        <begin position="1"/>
        <end position="281"/>
    </location>
</feature>
<feature type="active site" description="Proton donor" evidence="1">
    <location>
        <position position="75"/>
    </location>
</feature>
<feature type="active site" description="Proton acceptor" evidence="1">
    <location>
        <position position="220"/>
    </location>
</feature>
<feature type="binding site" evidence="1">
    <location>
        <position position="13"/>
    </location>
    <ligand>
        <name>substrate</name>
    </ligand>
</feature>
<feature type="binding site" evidence="1">
    <location>
        <position position="46"/>
    </location>
    <ligand>
        <name>substrate</name>
    </ligand>
</feature>
<feature type="binding site" evidence="1">
    <location>
        <position position="66"/>
    </location>
    <ligand>
        <name>substrate</name>
    </ligand>
</feature>
<feature type="binding site" evidence="1">
    <location>
        <begin position="76"/>
        <end position="77"/>
    </location>
    <ligand>
        <name>substrate</name>
    </ligand>
</feature>
<feature type="binding site" evidence="1">
    <location>
        <position position="160"/>
    </location>
    <ligand>
        <name>substrate</name>
    </ligand>
</feature>
<feature type="binding site" evidence="1">
    <location>
        <position position="193"/>
    </location>
    <ligand>
        <name>substrate</name>
    </ligand>
</feature>
<feature type="binding site" evidence="1">
    <location>
        <begin position="211"/>
        <end position="212"/>
    </location>
    <ligand>
        <name>substrate</name>
    </ligand>
</feature>
<feature type="binding site" evidence="1">
    <location>
        <begin position="221"/>
        <end position="222"/>
    </location>
    <ligand>
        <name>substrate</name>
    </ligand>
</feature>
<feature type="site" description="Could be important to modulate the pK values of the two catalytic cysteine residues" evidence="1">
    <location>
        <position position="162"/>
    </location>
</feature>
<feature type="site" description="Could be important to modulate the pK values of the two catalytic cysteine residues" evidence="1">
    <location>
        <position position="211"/>
    </location>
</feature>
<feature type="site" description="Important for dimerization" evidence="1">
    <location>
        <position position="270"/>
    </location>
</feature>
<organism>
    <name type="scientific">Acinetobacter baylyi (strain ATCC 33305 / BD413 / ADP1)</name>
    <dbReference type="NCBI Taxonomy" id="62977"/>
    <lineage>
        <taxon>Bacteria</taxon>
        <taxon>Pseudomonadati</taxon>
        <taxon>Pseudomonadota</taxon>
        <taxon>Gammaproteobacteria</taxon>
        <taxon>Moraxellales</taxon>
        <taxon>Moraxellaceae</taxon>
        <taxon>Acinetobacter</taxon>
    </lineage>
</organism>
<protein>
    <recommendedName>
        <fullName evidence="1">Diaminopimelate epimerase</fullName>
        <shortName evidence="1">DAP epimerase</shortName>
        <ecNumber evidence="1">5.1.1.7</ecNumber>
    </recommendedName>
    <alternativeName>
        <fullName evidence="1">PLP-independent amino acid racemase</fullName>
    </alternativeName>
</protein>
<keyword id="KW-0028">Amino-acid biosynthesis</keyword>
<keyword id="KW-0963">Cytoplasm</keyword>
<keyword id="KW-0413">Isomerase</keyword>
<keyword id="KW-0457">Lysine biosynthesis</keyword>
<dbReference type="EC" id="5.1.1.7" evidence="1"/>
<dbReference type="EMBL" id="CR543861">
    <property type="protein sequence ID" value="CAG69415.1"/>
    <property type="molecule type" value="Genomic_DNA"/>
</dbReference>
<dbReference type="RefSeq" id="WP_004928920.1">
    <property type="nucleotide sequence ID" value="NC_005966.1"/>
</dbReference>
<dbReference type="SMR" id="Q6F950"/>
<dbReference type="STRING" id="202950.GCA_001485005_02305"/>
<dbReference type="GeneID" id="45234935"/>
<dbReference type="KEGG" id="aci:ACIAD2659"/>
<dbReference type="eggNOG" id="COG0253">
    <property type="taxonomic scope" value="Bacteria"/>
</dbReference>
<dbReference type="HOGENOM" id="CLU_053306_1_1_6"/>
<dbReference type="OrthoDB" id="9805408at2"/>
<dbReference type="BioCyc" id="ASP62977:ACIAD_RS12090-MONOMER"/>
<dbReference type="UniPathway" id="UPA00034">
    <property type="reaction ID" value="UER00025"/>
</dbReference>
<dbReference type="Proteomes" id="UP000000430">
    <property type="component" value="Chromosome"/>
</dbReference>
<dbReference type="GO" id="GO:0005829">
    <property type="term" value="C:cytosol"/>
    <property type="evidence" value="ECO:0007669"/>
    <property type="project" value="TreeGrafter"/>
</dbReference>
<dbReference type="GO" id="GO:0008837">
    <property type="term" value="F:diaminopimelate epimerase activity"/>
    <property type="evidence" value="ECO:0007669"/>
    <property type="project" value="UniProtKB-UniRule"/>
</dbReference>
<dbReference type="GO" id="GO:0009089">
    <property type="term" value="P:lysine biosynthetic process via diaminopimelate"/>
    <property type="evidence" value="ECO:0007669"/>
    <property type="project" value="UniProtKB-UniRule"/>
</dbReference>
<dbReference type="FunFam" id="3.10.310.10:FF:000001">
    <property type="entry name" value="Diaminopimelate epimerase"/>
    <property type="match status" value="1"/>
</dbReference>
<dbReference type="FunFam" id="3.10.310.10:FF:000004">
    <property type="entry name" value="Diaminopimelate epimerase"/>
    <property type="match status" value="1"/>
</dbReference>
<dbReference type="Gene3D" id="3.10.310.10">
    <property type="entry name" value="Diaminopimelate Epimerase, Chain A, domain 1"/>
    <property type="match status" value="2"/>
</dbReference>
<dbReference type="HAMAP" id="MF_00197">
    <property type="entry name" value="DAP_epimerase"/>
    <property type="match status" value="1"/>
</dbReference>
<dbReference type="InterPro" id="IPR018510">
    <property type="entry name" value="DAP_epimerase_AS"/>
</dbReference>
<dbReference type="InterPro" id="IPR001653">
    <property type="entry name" value="DAP_epimerase_DapF"/>
</dbReference>
<dbReference type="NCBIfam" id="TIGR00652">
    <property type="entry name" value="DapF"/>
    <property type="match status" value="1"/>
</dbReference>
<dbReference type="PANTHER" id="PTHR31689:SF0">
    <property type="entry name" value="DIAMINOPIMELATE EPIMERASE"/>
    <property type="match status" value="1"/>
</dbReference>
<dbReference type="PANTHER" id="PTHR31689">
    <property type="entry name" value="DIAMINOPIMELATE EPIMERASE, CHLOROPLASTIC"/>
    <property type="match status" value="1"/>
</dbReference>
<dbReference type="Pfam" id="PF01678">
    <property type="entry name" value="DAP_epimerase"/>
    <property type="match status" value="2"/>
</dbReference>
<dbReference type="SUPFAM" id="SSF54506">
    <property type="entry name" value="Diaminopimelate epimerase-like"/>
    <property type="match status" value="1"/>
</dbReference>
<dbReference type="PROSITE" id="PS01326">
    <property type="entry name" value="DAP_EPIMERASE"/>
    <property type="match status" value="1"/>
</dbReference>
<gene>
    <name evidence="1" type="primary">dapF</name>
    <name type="ordered locus">ACIAD2659</name>
</gene>
<reference key="1">
    <citation type="journal article" date="2004" name="Nucleic Acids Res.">
        <title>Unique features revealed by the genome sequence of Acinetobacter sp. ADP1, a versatile and naturally transformation competent bacterium.</title>
        <authorList>
            <person name="Barbe V."/>
            <person name="Vallenet D."/>
            <person name="Fonknechten N."/>
            <person name="Kreimeyer A."/>
            <person name="Oztas S."/>
            <person name="Labarre L."/>
            <person name="Cruveiller S."/>
            <person name="Robert C."/>
            <person name="Duprat S."/>
            <person name="Wincker P."/>
            <person name="Ornston L.N."/>
            <person name="Weissenbach J."/>
            <person name="Marliere P."/>
            <person name="Cohen G.N."/>
            <person name="Medigue C."/>
        </authorList>
    </citation>
    <scope>NUCLEOTIDE SEQUENCE [LARGE SCALE GENOMIC DNA]</scope>
    <source>
        <strain>ATCC 33305 / BD413 / ADP1</strain>
    </source>
</reference>
<evidence type="ECO:0000255" key="1">
    <source>
        <dbReference type="HAMAP-Rule" id="MF_00197"/>
    </source>
</evidence>
<sequence length="281" mass="31461">MLLEFTKMHGLGNDFVVLDLISQRAYLDTTTIQRMADRHFGIGFDQLLIVEPPDYPNVDFKYRIFNADGSEVEQCGNGVRCFARFVHERQLTKKTKIKVQTKAGIVEPELGPNGWVRVNMGYPKFMPHEIPFVTEEFEALYTLELANEQSLKIDVVNMGNPHAVTIVPDVLTADVATMGPQVESHVRFPQRVNAGFMQIVDEKHIRLRVFERGVGETLACGTGACAAAVSGMRRGLLANEVEVELAGGKLQIAWQEGDVVWMTGPTANVYEGRLDLRYFQS</sequence>
<comment type="function">
    <text evidence="1">Catalyzes the stereoinversion of LL-2,6-diaminopimelate (L,L-DAP) to meso-diaminopimelate (meso-DAP), a precursor of L-lysine and an essential component of the bacterial peptidoglycan.</text>
</comment>
<comment type="catalytic activity">
    <reaction evidence="1">
        <text>(2S,6S)-2,6-diaminopimelate = meso-2,6-diaminopimelate</text>
        <dbReference type="Rhea" id="RHEA:15393"/>
        <dbReference type="ChEBI" id="CHEBI:57609"/>
        <dbReference type="ChEBI" id="CHEBI:57791"/>
        <dbReference type="EC" id="5.1.1.7"/>
    </reaction>
</comment>
<comment type="pathway">
    <text evidence="1">Amino-acid biosynthesis; L-lysine biosynthesis via DAP pathway; DL-2,6-diaminopimelate from LL-2,6-diaminopimelate: step 1/1.</text>
</comment>
<comment type="subunit">
    <text evidence="1">Homodimer.</text>
</comment>
<comment type="subcellular location">
    <subcellularLocation>
        <location evidence="1">Cytoplasm</location>
    </subcellularLocation>
</comment>
<comment type="similarity">
    <text evidence="1">Belongs to the diaminopimelate epimerase family.</text>
</comment>
<accession>Q6F950</accession>
<name>DAPF_ACIAD</name>